<proteinExistence type="inferred from homology"/>
<keyword id="KW-0067">ATP-binding</keyword>
<keyword id="KW-0143">Chaperone</keyword>
<keyword id="KW-0963">Cytoplasm</keyword>
<keyword id="KW-0413">Isomerase</keyword>
<keyword id="KW-0547">Nucleotide-binding</keyword>
<keyword id="KW-1185">Reference proteome</keyword>
<dbReference type="EC" id="5.6.1.7" evidence="1"/>
<dbReference type="EMBL" id="CP000095">
    <property type="protein sequence ID" value="AAZ58458.1"/>
    <property type="molecule type" value="Genomic_DNA"/>
</dbReference>
<dbReference type="RefSeq" id="WP_011295314.1">
    <property type="nucleotide sequence ID" value="NC_007335.2"/>
</dbReference>
<dbReference type="SMR" id="Q46J70"/>
<dbReference type="STRING" id="59920.PMN2A_0968"/>
<dbReference type="KEGG" id="pmn:PMN2A_0968"/>
<dbReference type="HOGENOM" id="CLU_016503_3_0_3"/>
<dbReference type="OrthoDB" id="9766614at2"/>
<dbReference type="PhylomeDB" id="Q46J70"/>
<dbReference type="Proteomes" id="UP000002535">
    <property type="component" value="Chromosome"/>
</dbReference>
<dbReference type="GO" id="GO:0005737">
    <property type="term" value="C:cytoplasm"/>
    <property type="evidence" value="ECO:0007669"/>
    <property type="project" value="UniProtKB-SubCell"/>
</dbReference>
<dbReference type="GO" id="GO:0005524">
    <property type="term" value="F:ATP binding"/>
    <property type="evidence" value="ECO:0007669"/>
    <property type="project" value="UniProtKB-UniRule"/>
</dbReference>
<dbReference type="GO" id="GO:0140662">
    <property type="term" value="F:ATP-dependent protein folding chaperone"/>
    <property type="evidence" value="ECO:0007669"/>
    <property type="project" value="InterPro"/>
</dbReference>
<dbReference type="GO" id="GO:0016853">
    <property type="term" value="F:isomerase activity"/>
    <property type="evidence" value="ECO:0007669"/>
    <property type="project" value="UniProtKB-KW"/>
</dbReference>
<dbReference type="GO" id="GO:0051082">
    <property type="term" value="F:unfolded protein binding"/>
    <property type="evidence" value="ECO:0007669"/>
    <property type="project" value="UniProtKB-UniRule"/>
</dbReference>
<dbReference type="GO" id="GO:0042026">
    <property type="term" value="P:protein refolding"/>
    <property type="evidence" value="ECO:0007669"/>
    <property type="project" value="UniProtKB-UniRule"/>
</dbReference>
<dbReference type="CDD" id="cd03344">
    <property type="entry name" value="GroEL"/>
    <property type="match status" value="1"/>
</dbReference>
<dbReference type="FunFam" id="3.50.7.10:FF:000001">
    <property type="entry name" value="60 kDa chaperonin"/>
    <property type="match status" value="1"/>
</dbReference>
<dbReference type="Gene3D" id="3.50.7.10">
    <property type="entry name" value="GroEL"/>
    <property type="match status" value="1"/>
</dbReference>
<dbReference type="Gene3D" id="1.10.560.10">
    <property type="entry name" value="GroEL-like equatorial domain"/>
    <property type="match status" value="1"/>
</dbReference>
<dbReference type="Gene3D" id="3.30.260.10">
    <property type="entry name" value="TCP-1-like chaperonin intermediate domain"/>
    <property type="match status" value="1"/>
</dbReference>
<dbReference type="HAMAP" id="MF_00600">
    <property type="entry name" value="CH60"/>
    <property type="match status" value="1"/>
</dbReference>
<dbReference type="InterPro" id="IPR018370">
    <property type="entry name" value="Chaperonin_Cpn60_CS"/>
</dbReference>
<dbReference type="InterPro" id="IPR001844">
    <property type="entry name" value="Cpn60/GroEL"/>
</dbReference>
<dbReference type="InterPro" id="IPR002423">
    <property type="entry name" value="Cpn60/GroEL/TCP-1"/>
</dbReference>
<dbReference type="InterPro" id="IPR027409">
    <property type="entry name" value="GroEL-like_apical_dom_sf"/>
</dbReference>
<dbReference type="InterPro" id="IPR027413">
    <property type="entry name" value="GROEL-like_equatorial_sf"/>
</dbReference>
<dbReference type="InterPro" id="IPR027410">
    <property type="entry name" value="TCP-1-like_intermed_sf"/>
</dbReference>
<dbReference type="NCBIfam" id="TIGR02348">
    <property type="entry name" value="GroEL"/>
    <property type="match status" value="1"/>
</dbReference>
<dbReference type="NCBIfam" id="NF000592">
    <property type="entry name" value="PRK00013.1"/>
    <property type="match status" value="1"/>
</dbReference>
<dbReference type="NCBIfam" id="NF009487">
    <property type="entry name" value="PRK12849.1"/>
    <property type="match status" value="1"/>
</dbReference>
<dbReference type="NCBIfam" id="NF009488">
    <property type="entry name" value="PRK12850.1"/>
    <property type="match status" value="1"/>
</dbReference>
<dbReference type="NCBIfam" id="NF009489">
    <property type="entry name" value="PRK12851.1"/>
    <property type="match status" value="1"/>
</dbReference>
<dbReference type="PANTHER" id="PTHR45633">
    <property type="entry name" value="60 KDA HEAT SHOCK PROTEIN, MITOCHONDRIAL"/>
    <property type="match status" value="1"/>
</dbReference>
<dbReference type="Pfam" id="PF00118">
    <property type="entry name" value="Cpn60_TCP1"/>
    <property type="match status" value="1"/>
</dbReference>
<dbReference type="PRINTS" id="PR00298">
    <property type="entry name" value="CHAPERONIN60"/>
</dbReference>
<dbReference type="SUPFAM" id="SSF52029">
    <property type="entry name" value="GroEL apical domain-like"/>
    <property type="match status" value="1"/>
</dbReference>
<dbReference type="SUPFAM" id="SSF48592">
    <property type="entry name" value="GroEL equatorial domain-like"/>
    <property type="match status" value="2"/>
</dbReference>
<dbReference type="PROSITE" id="PS00296">
    <property type="entry name" value="CHAPERONINS_CPN60"/>
    <property type="match status" value="1"/>
</dbReference>
<organism>
    <name type="scientific">Prochlorococcus marinus (strain NATL2A)</name>
    <dbReference type="NCBI Taxonomy" id="59920"/>
    <lineage>
        <taxon>Bacteria</taxon>
        <taxon>Bacillati</taxon>
        <taxon>Cyanobacteriota</taxon>
        <taxon>Cyanophyceae</taxon>
        <taxon>Synechococcales</taxon>
        <taxon>Prochlorococcaceae</taxon>
        <taxon>Prochlorococcus</taxon>
    </lineage>
</organism>
<comment type="function">
    <text evidence="1">Together with its co-chaperonin GroES, plays an essential role in assisting protein folding. The GroEL-GroES system forms a nano-cage that allows encapsulation of the non-native substrate proteins and provides a physical environment optimized to promote and accelerate protein folding.</text>
</comment>
<comment type="catalytic activity">
    <reaction evidence="1">
        <text>ATP + H2O + a folded polypeptide = ADP + phosphate + an unfolded polypeptide.</text>
        <dbReference type="EC" id="5.6.1.7"/>
    </reaction>
</comment>
<comment type="subunit">
    <text evidence="1">Forms a cylinder of 14 subunits composed of two heptameric rings stacked back-to-back. Interacts with the co-chaperonin GroES.</text>
</comment>
<comment type="subcellular location">
    <subcellularLocation>
        <location evidence="1">Cytoplasm</location>
    </subcellularLocation>
</comment>
<comment type="similarity">
    <text evidence="1">Belongs to the chaperonin (HSP60) family.</text>
</comment>
<feature type="chain" id="PRO_0000256948" description="Chaperonin GroEL 1">
    <location>
        <begin position="1"/>
        <end position="543"/>
    </location>
</feature>
<feature type="binding site" evidence="1">
    <location>
        <begin position="29"/>
        <end position="32"/>
    </location>
    <ligand>
        <name>ATP</name>
        <dbReference type="ChEBI" id="CHEBI:30616"/>
    </ligand>
</feature>
<feature type="binding site" evidence="1">
    <location>
        <begin position="86"/>
        <end position="90"/>
    </location>
    <ligand>
        <name>ATP</name>
        <dbReference type="ChEBI" id="CHEBI:30616"/>
    </ligand>
</feature>
<feature type="binding site" evidence="1">
    <location>
        <position position="413"/>
    </location>
    <ligand>
        <name>ATP</name>
        <dbReference type="ChEBI" id="CHEBI:30616"/>
    </ligand>
</feature>
<feature type="binding site" evidence="1">
    <location>
        <begin position="479"/>
        <end position="481"/>
    </location>
    <ligand>
        <name>ATP</name>
        <dbReference type="ChEBI" id="CHEBI:30616"/>
    </ligand>
</feature>
<feature type="binding site" evidence="1">
    <location>
        <position position="495"/>
    </location>
    <ligand>
        <name>ATP</name>
        <dbReference type="ChEBI" id="CHEBI:30616"/>
    </ligand>
</feature>
<reference key="1">
    <citation type="journal article" date="2007" name="PLoS Genet.">
        <title>Patterns and implications of gene gain and loss in the evolution of Prochlorococcus.</title>
        <authorList>
            <person name="Kettler G.C."/>
            <person name="Martiny A.C."/>
            <person name="Huang K."/>
            <person name="Zucker J."/>
            <person name="Coleman M.L."/>
            <person name="Rodrigue S."/>
            <person name="Chen F."/>
            <person name="Lapidus A."/>
            <person name="Ferriera S."/>
            <person name="Johnson J."/>
            <person name="Steglich C."/>
            <person name="Church G.M."/>
            <person name="Richardson P."/>
            <person name="Chisholm S.W."/>
        </authorList>
    </citation>
    <scope>NUCLEOTIDE SEQUENCE [LARGE SCALE GENOMIC DNA]</scope>
    <source>
        <strain>NATL2A</strain>
    </source>
</reference>
<accession>Q46J70</accession>
<gene>
    <name evidence="1" type="primary">groEL1</name>
    <name evidence="1" type="synonym">groL1</name>
    <name type="ordered locus">PMN2A_0968</name>
</gene>
<name>CH601_PROMT</name>
<sequence>MAKRIIYNEQARRALERGIDILAESVAVTLGPKGRNVVLEKKFGAPQIINDGVTIAKEIELEDHIENTGVALIRQAASKTNDAAGDGTTTATVLAHAMVKAGLKNVAAGANAITLKKGIDKATEFLVEKIKDHSKPISDSNAIAQCGTIAAGNDEEVGKMIADAMDKVGKEGVISLEEGKSMTTELEVTEGMRFDKGYISPYFATDTERMEAVLDEPYILLTDKKIGLVQDLVPVLEQVAKTGKPLLIIAEDIEKEALATLVVNRLRGVLNVAAVKAPGFGDRRKAMLEDMAVLTNGQLITEDAGLKLENATLDMLGTSRRVTINKDTSTIVAEGNEVAVNARCEQIKKQMDETDSTYDKEKLQERLAKLSGGVAVVKVGAATETEMKDKKLRLEDAINATKAAVEEGIVPGGGTTLAHLAPALGDWSSSNLSGEELIGANIVEAALTSPLMRIAENAGANGAVVAENVKSKPVNDGYNAATGEYVDMLSAGIVDPAKVTRSGLQNAASIAGMVLTTECIVADLPEKKDSSSAGGGMGGDFDY</sequence>
<evidence type="ECO:0000255" key="1">
    <source>
        <dbReference type="HAMAP-Rule" id="MF_00600"/>
    </source>
</evidence>
<protein>
    <recommendedName>
        <fullName evidence="1">Chaperonin GroEL 1</fullName>
        <ecNumber evidence="1">5.6.1.7</ecNumber>
    </recommendedName>
    <alternativeName>
        <fullName evidence="1">60 kDa chaperonin 1</fullName>
    </alternativeName>
    <alternativeName>
        <fullName evidence="1">Chaperonin-60 1</fullName>
        <shortName evidence="1">Cpn60 1</shortName>
    </alternativeName>
</protein>